<accession>Q3SZF2</accession>
<gene>
    <name type="primary">ARF4</name>
</gene>
<protein>
    <recommendedName>
        <fullName>ADP-ribosylation factor 4</fullName>
    </recommendedName>
</protein>
<proteinExistence type="evidence at transcript level"/>
<comment type="function">
    <text evidence="1 2">GTP-binding protein that functions as an allosteric activator of the cholera toxin catalytic subunit, an ADP-ribosyltransferase. Involved in protein trafficking; may modulate vesicle budding and uncoating within the Golgi apparatus (By similarity). Part of the ciliary targeting complex containing Rab11, ASAP1, Rabin8/RAB3IP, RAB11FIP3 and ARF4, which direct preciliary vesicle trafficking to mother centriole and ciliogenesis initiation (By similarity).</text>
</comment>
<comment type="subunit">
    <text evidence="2">Forms a complex containing RAB11A, ASAP1, RAB3IP, RAP11FIP3 and ARF4; the complex promotes preciliary trafficking; the complex binds to RHO in photoreceptor cells and promotes RHO ciliary transport.</text>
</comment>
<comment type="subcellular location">
    <subcellularLocation>
        <location evidence="2">Golgi apparatus</location>
    </subcellularLocation>
    <subcellularLocation>
        <location evidence="2">Membrane</location>
        <topology evidence="2">Lipid-anchor</topology>
    </subcellularLocation>
</comment>
<comment type="similarity">
    <text evidence="3">Belongs to the small GTPase superfamily. Arf family.</text>
</comment>
<name>ARF4_BOVIN</name>
<evidence type="ECO:0000250" key="1"/>
<evidence type="ECO:0000250" key="2">
    <source>
        <dbReference type="UniProtKB" id="P18085"/>
    </source>
</evidence>
<evidence type="ECO:0000305" key="3"/>
<reference key="1">
    <citation type="submission" date="2005-08" db="EMBL/GenBank/DDBJ databases">
        <authorList>
            <consortium name="NIH - Mammalian Gene Collection (MGC) project"/>
        </authorList>
    </citation>
    <scope>NUCLEOTIDE SEQUENCE [LARGE SCALE MRNA]</scope>
    <source>
        <strain>Hereford</strain>
        <tissue>Testis</tissue>
    </source>
</reference>
<organism>
    <name type="scientific">Bos taurus</name>
    <name type="common">Bovine</name>
    <dbReference type="NCBI Taxonomy" id="9913"/>
    <lineage>
        <taxon>Eukaryota</taxon>
        <taxon>Metazoa</taxon>
        <taxon>Chordata</taxon>
        <taxon>Craniata</taxon>
        <taxon>Vertebrata</taxon>
        <taxon>Euteleostomi</taxon>
        <taxon>Mammalia</taxon>
        <taxon>Eutheria</taxon>
        <taxon>Laurasiatheria</taxon>
        <taxon>Artiodactyla</taxon>
        <taxon>Ruminantia</taxon>
        <taxon>Pecora</taxon>
        <taxon>Bovidae</taxon>
        <taxon>Bovinae</taxon>
        <taxon>Bos</taxon>
    </lineage>
</organism>
<keyword id="KW-0931">ER-Golgi transport</keyword>
<keyword id="KW-0333">Golgi apparatus</keyword>
<keyword id="KW-0342">GTP-binding</keyword>
<keyword id="KW-0449">Lipoprotein</keyword>
<keyword id="KW-0472">Membrane</keyword>
<keyword id="KW-0519">Myristate</keyword>
<keyword id="KW-0547">Nucleotide-binding</keyword>
<keyword id="KW-0597">Phosphoprotein</keyword>
<keyword id="KW-0653">Protein transport</keyword>
<keyword id="KW-1185">Reference proteome</keyword>
<keyword id="KW-0813">Transport</keyword>
<feature type="initiator methionine" description="Removed" evidence="2">
    <location>
        <position position="1"/>
    </location>
</feature>
<feature type="chain" id="PRO_0000245351" description="ADP-ribosylation factor 4">
    <location>
        <begin position="2"/>
        <end position="180"/>
    </location>
</feature>
<feature type="binding site" evidence="1">
    <location>
        <begin position="24"/>
        <end position="31"/>
    </location>
    <ligand>
        <name>GTP</name>
        <dbReference type="ChEBI" id="CHEBI:37565"/>
    </ligand>
</feature>
<feature type="binding site" evidence="1">
    <location>
        <begin position="67"/>
        <end position="71"/>
    </location>
    <ligand>
        <name>GTP</name>
        <dbReference type="ChEBI" id="CHEBI:37565"/>
    </ligand>
</feature>
<feature type="binding site" evidence="1">
    <location>
        <begin position="126"/>
        <end position="129"/>
    </location>
    <ligand>
        <name>GTP</name>
        <dbReference type="ChEBI" id="CHEBI:37565"/>
    </ligand>
</feature>
<feature type="modified residue" description="Phosphoserine" evidence="2">
    <location>
        <position position="147"/>
    </location>
</feature>
<feature type="lipid moiety-binding region" description="N-myristoyl glycine" evidence="2">
    <location>
        <position position="2"/>
    </location>
</feature>
<dbReference type="EMBL" id="BC102895">
    <property type="protein sequence ID" value="AAI02896.1"/>
    <property type="molecule type" value="mRNA"/>
</dbReference>
<dbReference type="RefSeq" id="NP_001029702.1">
    <property type="nucleotide sequence ID" value="NM_001034530.2"/>
</dbReference>
<dbReference type="SMR" id="Q3SZF2"/>
<dbReference type="BioGRID" id="175221">
    <property type="interactions" value="1"/>
</dbReference>
<dbReference type="FunCoup" id="Q3SZF2">
    <property type="interactions" value="1862"/>
</dbReference>
<dbReference type="STRING" id="9913.ENSBTAP00000021386"/>
<dbReference type="PaxDb" id="9913-ENSBTAP00000021386"/>
<dbReference type="PeptideAtlas" id="Q3SZF2"/>
<dbReference type="Ensembl" id="ENSBTAT00000021386.3">
    <property type="protein sequence ID" value="ENSBTAP00000021386.2"/>
    <property type="gene ID" value="ENSBTAG00000016069.4"/>
</dbReference>
<dbReference type="GeneID" id="518601"/>
<dbReference type="KEGG" id="bta:518601"/>
<dbReference type="CTD" id="378"/>
<dbReference type="VEuPathDB" id="HostDB:ENSBTAG00000016069"/>
<dbReference type="VGNC" id="VGNC:26059">
    <property type="gene designation" value="ARF4"/>
</dbReference>
<dbReference type="eggNOG" id="KOG0070">
    <property type="taxonomic scope" value="Eukaryota"/>
</dbReference>
<dbReference type="GeneTree" id="ENSGT00940000165441"/>
<dbReference type="HOGENOM" id="CLU_040729_9_3_1"/>
<dbReference type="InParanoid" id="Q3SZF2"/>
<dbReference type="OMA" id="DWLCNEL"/>
<dbReference type="OrthoDB" id="2011769at2759"/>
<dbReference type="TreeFam" id="TF300808"/>
<dbReference type="Reactome" id="R-BTA-5620916">
    <property type="pathway name" value="VxPx cargo-targeting to cilium"/>
</dbReference>
<dbReference type="Reactome" id="R-BTA-6807878">
    <property type="pathway name" value="COPI-mediated anterograde transport"/>
</dbReference>
<dbReference type="Reactome" id="R-BTA-6811434">
    <property type="pathway name" value="COPI-dependent Golgi-to-ER retrograde traffic"/>
</dbReference>
<dbReference type="Proteomes" id="UP000009136">
    <property type="component" value="Chromosome 22"/>
</dbReference>
<dbReference type="Bgee" id="ENSBTAG00000016069">
    <property type="expression patterns" value="Expressed in spermatid and 108 other cell types or tissues"/>
</dbReference>
<dbReference type="GO" id="GO:0005737">
    <property type="term" value="C:cytoplasm"/>
    <property type="evidence" value="ECO:0000318"/>
    <property type="project" value="GO_Central"/>
</dbReference>
<dbReference type="GO" id="GO:0000139">
    <property type="term" value="C:Golgi membrane"/>
    <property type="evidence" value="ECO:0000250"/>
    <property type="project" value="UniProtKB"/>
</dbReference>
<dbReference type="GO" id="GO:0005886">
    <property type="term" value="C:plasma membrane"/>
    <property type="evidence" value="ECO:0000318"/>
    <property type="project" value="GO_Central"/>
</dbReference>
<dbReference type="GO" id="GO:0005525">
    <property type="term" value="F:GTP binding"/>
    <property type="evidence" value="ECO:0000318"/>
    <property type="project" value="GO_Central"/>
</dbReference>
<dbReference type="GO" id="GO:0003924">
    <property type="term" value="F:GTPase activity"/>
    <property type="evidence" value="ECO:0007669"/>
    <property type="project" value="InterPro"/>
</dbReference>
<dbReference type="GO" id="GO:0006886">
    <property type="term" value="P:intracellular protein transport"/>
    <property type="evidence" value="ECO:0000318"/>
    <property type="project" value="GO_Central"/>
</dbReference>
<dbReference type="GO" id="GO:1902017">
    <property type="term" value="P:regulation of cilium assembly"/>
    <property type="evidence" value="ECO:0000250"/>
    <property type="project" value="UniProtKB"/>
</dbReference>
<dbReference type="GO" id="GO:0016192">
    <property type="term" value="P:vesicle-mediated transport"/>
    <property type="evidence" value="ECO:0000318"/>
    <property type="project" value="GO_Central"/>
</dbReference>
<dbReference type="CDD" id="cd04150">
    <property type="entry name" value="Arf1_5_like"/>
    <property type="match status" value="1"/>
</dbReference>
<dbReference type="FunFam" id="3.40.50.300:FF:000024">
    <property type="entry name" value="ADP-ribosylation factor 1"/>
    <property type="match status" value="1"/>
</dbReference>
<dbReference type="Gene3D" id="3.40.50.300">
    <property type="entry name" value="P-loop containing nucleotide triphosphate hydrolases"/>
    <property type="match status" value="1"/>
</dbReference>
<dbReference type="InterPro" id="IPR045872">
    <property type="entry name" value="Arf1-5-like"/>
</dbReference>
<dbReference type="InterPro" id="IPR027417">
    <property type="entry name" value="P-loop_NTPase"/>
</dbReference>
<dbReference type="InterPro" id="IPR005225">
    <property type="entry name" value="Small_GTP-bd"/>
</dbReference>
<dbReference type="InterPro" id="IPR024156">
    <property type="entry name" value="Small_GTPase_ARF"/>
</dbReference>
<dbReference type="InterPro" id="IPR006689">
    <property type="entry name" value="Small_GTPase_ARF/SAR"/>
</dbReference>
<dbReference type="NCBIfam" id="TIGR00231">
    <property type="entry name" value="small_GTP"/>
    <property type="match status" value="1"/>
</dbReference>
<dbReference type="PANTHER" id="PTHR11711">
    <property type="entry name" value="ADP RIBOSYLATION FACTOR-RELATED"/>
    <property type="match status" value="1"/>
</dbReference>
<dbReference type="Pfam" id="PF00025">
    <property type="entry name" value="Arf"/>
    <property type="match status" value="1"/>
</dbReference>
<dbReference type="PRINTS" id="PR00328">
    <property type="entry name" value="SAR1GTPBP"/>
</dbReference>
<dbReference type="SMART" id="SM00177">
    <property type="entry name" value="ARF"/>
    <property type="match status" value="1"/>
</dbReference>
<dbReference type="SMART" id="SM00175">
    <property type="entry name" value="RAB"/>
    <property type="match status" value="1"/>
</dbReference>
<dbReference type="SMART" id="SM00178">
    <property type="entry name" value="SAR"/>
    <property type="match status" value="1"/>
</dbReference>
<dbReference type="SUPFAM" id="SSF52540">
    <property type="entry name" value="P-loop containing nucleoside triphosphate hydrolases"/>
    <property type="match status" value="1"/>
</dbReference>
<dbReference type="PROSITE" id="PS51417">
    <property type="entry name" value="ARF"/>
    <property type="match status" value="1"/>
</dbReference>
<sequence>MGLTISSLFSRLFGKKQMRILMVGLDAAGKTTILYKLKLGEIVTTIPTIGFNVETVEYKNICFTVWDVGGQDKIRPLWRHYFQNTQGLIFVVDSNDRERIQEGAEELQKMLQEDELRDAVLLLFANKQDLPNAMAISEMTDKLGLQSLRNRTWYVQATCATQGTGLYEGLDWLSNELSKR</sequence>